<keyword id="KW-1185">Reference proteome</keyword>
<keyword id="KW-0687">Ribonucleoprotein</keyword>
<keyword id="KW-0689">Ribosomal protein</keyword>
<dbReference type="EMBL" id="CP000828">
    <property type="protein sequence ID" value="ABW27139.1"/>
    <property type="molecule type" value="Genomic_DNA"/>
</dbReference>
<dbReference type="RefSeq" id="WP_010477430.1">
    <property type="nucleotide sequence ID" value="NC_009925.1"/>
</dbReference>
<dbReference type="SMR" id="B0BZS9"/>
<dbReference type="STRING" id="329726.AM1_2123"/>
<dbReference type="KEGG" id="amr:AM1_2123"/>
<dbReference type="eggNOG" id="COG0291">
    <property type="taxonomic scope" value="Bacteria"/>
</dbReference>
<dbReference type="HOGENOM" id="CLU_169643_4_0_3"/>
<dbReference type="OrthoDB" id="47476at2"/>
<dbReference type="Proteomes" id="UP000000268">
    <property type="component" value="Chromosome"/>
</dbReference>
<dbReference type="GO" id="GO:0022625">
    <property type="term" value="C:cytosolic large ribosomal subunit"/>
    <property type="evidence" value="ECO:0007669"/>
    <property type="project" value="TreeGrafter"/>
</dbReference>
<dbReference type="GO" id="GO:0003735">
    <property type="term" value="F:structural constituent of ribosome"/>
    <property type="evidence" value="ECO:0007669"/>
    <property type="project" value="InterPro"/>
</dbReference>
<dbReference type="GO" id="GO:0006412">
    <property type="term" value="P:translation"/>
    <property type="evidence" value="ECO:0007669"/>
    <property type="project" value="UniProtKB-UniRule"/>
</dbReference>
<dbReference type="FunFam" id="4.10.410.60:FF:000001">
    <property type="entry name" value="50S ribosomal protein L35"/>
    <property type="match status" value="1"/>
</dbReference>
<dbReference type="Gene3D" id="4.10.410.60">
    <property type="match status" value="1"/>
</dbReference>
<dbReference type="HAMAP" id="MF_00514">
    <property type="entry name" value="Ribosomal_bL35"/>
    <property type="match status" value="1"/>
</dbReference>
<dbReference type="InterPro" id="IPR001706">
    <property type="entry name" value="Ribosomal_bL35"/>
</dbReference>
<dbReference type="InterPro" id="IPR021137">
    <property type="entry name" value="Ribosomal_bL35-like"/>
</dbReference>
<dbReference type="InterPro" id="IPR018265">
    <property type="entry name" value="Ribosomal_bL35_CS"/>
</dbReference>
<dbReference type="InterPro" id="IPR037229">
    <property type="entry name" value="Ribosomal_bL35_sf"/>
</dbReference>
<dbReference type="NCBIfam" id="TIGR00001">
    <property type="entry name" value="rpmI_bact"/>
    <property type="match status" value="1"/>
</dbReference>
<dbReference type="PANTHER" id="PTHR33343">
    <property type="entry name" value="54S RIBOSOMAL PROTEIN BL35M"/>
    <property type="match status" value="1"/>
</dbReference>
<dbReference type="PANTHER" id="PTHR33343:SF1">
    <property type="entry name" value="LARGE RIBOSOMAL SUBUNIT PROTEIN BL35M"/>
    <property type="match status" value="1"/>
</dbReference>
<dbReference type="Pfam" id="PF01632">
    <property type="entry name" value="Ribosomal_L35p"/>
    <property type="match status" value="1"/>
</dbReference>
<dbReference type="PRINTS" id="PR00064">
    <property type="entry name" value="RIBOSOMALL35"/>
</dbReference>
<dbReference type="SUPFAM" id="SSF143034">
    <property type="entry name" value="L35p-like"/>
    <property type="match status" value="1"/>
</dbReference>
<dbReference type="PROSITE" id="PS00936">
    <property type="entry name" value="RIBOSOMAL_L35"/>
    <property type="match status" value="1"/>
</dbReference>
<protein>
    <recommendedName>
        <fullName evidence="1">Large ribosomal subunit protein bL35</fullName>
    </recommendedName>
    <alternativeName>
        <fullName evidence="2">50S ribosomal protein L35</fullName>
    </alternativeName>
</protein>
<proteinExistence type="inferred from homology"/>
<sequence>MPKLKTRRSAAKRFKRSGSGKFMRRKAYKNHLLEHKGPDRKSRLSKKCVVSEQDAENVRAMMPYS</sequence>
<accession>B0BZS9</accession>
<reference key="1">
    <citation type="journal article" date="2008" name="Proc. Natl. Acad. Sci. U.S.A.">
        <title>Niche adaptation and genome expansion in the chlorophyll d-producing cyanobacterium Acaryochloris marina.</title>
        <authorList>
            <person name="Swingley W.D."/>
            <person name="Chen M."/>
            <person name="Cheung P.C."/>
            <person name="Conrad A.L."/>
            <person name="Dejesa L.C."/>
            <person name="Hao J."/>
            <person name="Honchak B.M."/>
            <person name="Karbach L.E."/>
            <person name="Kurdoglu A."/>
            <person name="Lahiri S."/>
            <person name="Mastrian S.D."/>
            <person name="Miyashita H."/>
            <person name="Page L."/>
            <person name="Ramakrishna P."/>
            <person name="Satoh S."/>
            <person name="Sattley W.M."/>
            <person name="Shimada Y."/>
            <person name="Taylor H.L."/>
            <person name="Tomo T."/>
            <person name="Tsuchiya T."/>
            <person name="Wang Z.T."/>
            <person name="Raymond J."/>
            <person name="Mimuro M."/>
            <person name="Blankenship R.E."/>
            <person name="Touchman J.W."/>
        </authorList>
    </citation>
    <scope>NUCLEOTIDE SEQUENCE [LARGE SCALE GENOMIC DNA]</scope>
    <source>
        <strain>MBIC 11017</strain>
    </source>
</reference>
<evidence type="ECO:0000255" key="1">
    <source>
        <dbReference type="HAMAP-Rule" id="MF_00514"/>
    </source>
</evidence>
<evidence type="ECO:0000305" key="2"/>
<comment type="similarity">
    <text evidence="1">Belongs to the bacterial ribosomal protein bL35 family.</text>
</comment>
<name>RL35_ACAM1</name>
<gene>
    <name evidence="1" type="primary">rpmI</name>
    <name evidence="1" type="synonym">rpl35</name>
    <name type="ordered locus">AM1_2123</name>
</gene>
<feature type="chain" id="PRO_1000081593" description="Large ribosomal subunit protein bL35">
    <location>
        <begin position="1"/>
        <end position="65"/>
    </location>
</feature>
<organism>
    <name type="scientific">Acaryochloris marina (strain MBIC 11017)</name>
    <dbReference type="NCBI Taxonomy" id="329726"/>
    <lineage>
        <taxon>Bacteria</taxon>
        <taxon>Bacillati</taxon>
        <taxon>Cyanobacteriota</taxon>
        <taxon>Cyanophyceae</taxon>
        <taxon>Acaryochloridales</taxon>
        <taxon>Acaryochloridaceae</taxon>
        <taxon>Acaryochloris</taxon>
    </lineage>
</organism>